<gene>
    <name evidence="1 4" type="primary">garR</name>
    <name type="synonym">yhaE</name>
    <name type="ordered locus">b3125</name>
    <name type="ordered locus">JW5526</name>
</gene>
<reference key="1">
    <citation type="journal article" date="1991" name="J. Bacteriol.">
        <title>Precise mapping of the rnpB gene encoding the RNA component of RNase P in Escherichia coli K-12.</title>
        <authorList>
            <person name="Komine Y."/>
            <person name="Inokuchi H."/>
        </authorList>
    </citation>
    <scope>NUCLEOTIDE SEQUENCE [GENOMIC DNA]</scope>
    <source>
        <strain>K12</strain>
    </source>
</reference>
<reference key="2">
    <citation type="journal article" date="1997" name="Science">
        <title>The complete genome sequence of Escherichia coli K-12.</title>
        <authorList>
            <person name="Blattner F.R."/>
            <person name="Plunkett G. III"/>
            <person name="Bloch C.A."/>
            <person name="Perna N.T."/>
            <person name="Burland V."/>
            <person name="Riley M."/>
            <person name="Collado-Vides J."/>
            <person name="Glasner J.D."/>
            <person name="Rode C.K."/>
            <person name="Mayhew G.F."/>
            <person name="Gregor J."/>
            <person name="Davis N.W."/>
            <person name="Kirkpatrick H.A."/>
            <person name="Goeden M.A."/>
            <person name="Rose D.J."/>
            <person name="Mau B."/>
            <person name="Shao Y."/>
        </authorList>
    </citation>
    <scope>NUCLEOTIDE SEQUENCE [LARGE SCALE GENOMIC DNA]</scope>
    <source>
        <strain>K12 / MG1655 / ATCC 47076</strain>
    </source>
</reference>
<reference key="3">
    <citation type="journal article" date="2006" name="Mol. Syst. Biol.">
        <title>Highly accurate genome sequences of Escherichia coli K-12 strains MG1655 and W3110.</title>
        <authorList>
            <person name="Hayashi K."/>
            <person name="Morooka N."/>
            <person name="Yamamoto Y."/>
            <person name="Fujita K."/>
            <person name="Isono K."/>
            <person name="Choi S."/>
            <person name="Ohtsubo E."/>
            <person name="Baba T."/>
            <person name="Wanner B.L."/>
            <person name="Mori H."/>
            <person name="Horiuchi T."/>
        </authorList>
    </citation>
    <scope>NUCLEOTIDE SEQUENCE [LARGE SCALE GENOMIC DNA]</scope>
    <source>
        <strain>K12 / W3110 / ATCC 27325 / DSM 5911</strain>
    </source>
</reference>
<reference key="4">
    <citation type="journal article" date="1998" name="Biochemistry">
        <title>Evolution of enzymatic activities in the enolase superfamily: characterization of the (D)-glucarate/galactarate catabolic pathway in Escherichia coli.</title>
        <authorList>
            <person name="Hubbard B.K."/>
            <person name="Koch M."/>
            <person name="Palmer D.R."/>
            <person name="Babbitt P.C."/>
            <person name="Gerlt J.A."/>
        </authorList>
    </citation>
    <scope>FUNCTION</scope>
    <scope>CATALYTIC ACTIVITY</scope>
    <scope>PATHWAY</scope>
</reference>
<reference key="5">
    <citation type="journal article" date="2000" name="J. Bacteriol.">
        <title>A common regulator for the operons encoding the enzymes involved in D-galactarate, D-glucarate, and D-glycerate utilization in Escherichia coli.</title>
        <authorList>
            <person name="Monterrubio R."/>
            <person name="Baldoma L."/>
            <person name="Obradors N."/>
            <person name="Aguilar J."/>
            <person name="Badia J."/>
        </authorList>
    </citation>
    <scope>GENE NAME</scope>
    <scope>INDUCTION</scope>
</reference>
<feature type="chain" id="PRO_0000173059" description="2-hydroxy-3-oxopropionate reductase">
    <location>
        <begin position="1"/>
        <end position="294"/>
    </location>
</feature>
<feature type="active site" evidence="1">
    <location>
        <position position="170"/>
    </location>
</feature>
<feature type="binding site" evidence="1">
    <location>
        <begin position="4"/>
        <end position="18"/>
    </location>
    <ligand>
        <name>NAD(+)</name>
        <dbReference type="ChEBI" id="CHEBI:57540"/>
    </ligand>
</feature>
<feature type="binding site" evidence="1">
    <location>
        <position position="95"/>
    </location>
    <ligand>
        <name>NAD(+)</name>
        <dbReference type="ChEBI" id="CHEBI:57540"/>
    </ligand>
</feature>
<feature type="binding site" evidence="1">
    <location>
        <position position="238"/>
    </location>
    <ligand>
        <name>NAD(+)</name>
        <dbReference type="ChEBI" id="CHEBI:57540"/>
    </ligand>
</feature>
<comment type="function">
    <text evidence="1 3">Catalyzes the reduction of tatronate semialdehyde to D-glycerate.</text>
</comment>
<comment type="catalytic activity">
    <reaction evidence="1 3">
        <text>(R)-glycerate + NADP(+) = 2-hydroxy-3-oxopropanoate + NADPH + H(+)</text>
        <dbReference type="Rhea" id="RHEA:18841"/>
        <dbReference type="ChEBI" id="CHEBI:15378"/>
        <dbReference type="ChEBI" id="CHEBI:16659"/>
        <dbReference type="ChEBI" id="CHEBI:57783"/>
        <dbReference type="ChEBI" id="CHEBI:57978"/>
        <dbReference type="ChEBI" id="CHEBI:58349"/>
        <dbReference type="EC" id="1.1.1.60"/>
    </reaction>
</comment>
<comment type="catalytic activity">
    <reaction evidence="1 3">
        <text>(R)-glycerate + NAD(+) = 2-hydroxy-3-oxopropanoate + NADH + H(+)</text>
        <dbReference type="Rhea" id="RHEA:18845"/>
        <dbReference type="ChEBI" id="CHEBI:15378"/>
        <dbReference type="ChEBI" id="CHEBI:16659"/>
        <dbReference type="ChEBI" id="CHEBI:57540"/>
        <dbReference type="ChEBI" id="CHEBI:57945"/>
        <dbReference type="ChEBI" id="CHEBI:57978"/>
        <dbReference type="EC" id="1.1.1.60"/>
    </reaction>
</comment>
<comment type="pathway">
    <text evidence="1 3">Carbohydrate acid metabolism; galactarate degradation; D-glycerate from galactarate: step 3/3.</text>
</comment>
<comment type="induction">
    <text evidence="2">Induced by D-galactarate, D-glucarate and D-glycerate.</text>
</comment>
<comment type="similarity">
    <text evidence="1">Belongs to the HIBADH-related family. 2-hydroxy-3-oxopropionate reductase subfamily.</text>
</comment>
<comment type="sequence caution" evidence="6">
    <conflict type="erroneous initiation">
        <sequence resource="EMBL-CDS" id="AAA57928"/>
    </conflict>
    <text>Extended N-terminus.</text>
</comment>
<comment type="sequence caution" evidence="6">
    <conflict type="erroneous initiation">
        <sequence resource="EMBL-CDS" id="BAA14238"/>
    </conflict>
    <text>Extended N-terminus.</text>
</comment>
<comment type="sequence caution" evidence="6">
    <conflict type="erroneous initiation">
        <sequence resource="EMBL-CDS" id="BAE77172"/>
    </conflict>
    <text>Extended N-terminus.</text>
</comment>
<dbReference type="EC" id="1.1.1.60" evidence="1 3"/>
<dbReference type="EMBL" id="D90212">
    <property type="protein sequence ID" value="BAA14238.1"/>
    <property type="status" value="ALT_INIT"/>
    <property type="molecule type" value="Genomic_DNA"/>
</dbReference>
<dbReference type="EMBL" id="U18997">
    <property type="protein sequence ID" value="AAA57928.1"/>
    <property type="status" value="ALT_INIT"/>
    <property type="molecule type" value="Genomic_DNA"/>
</dbReference>
<dbReference type="EMBL" id="U00096">
    <property type="protein sequence ID" value="AAC76159.3"/>
    <property type="molecule type" value="Genomic_DNA"/>
</dbReference>
<dbReference type="EMBL" id="AP009048">
    <property type="protein sequence ID" value="BAE77172.1"/>
    <property type="status" value="ALT_INIT"/>
    <property type="molecule type" value="Genomic_DNA"/>
</dbReference>
<dbReference type="RefSeq" id="NP_417594.3">
    <property type="nucleotide sequence ID" value="NC_000913.3"/>
</dbReference>
<dbReference type="SMR" id="P0ABQ2"/>
<dbReference type="BioGRID" id="4259488">
    <property type="interactions" value="57"/>
</dbReference>
<dbReference type="DIP" id="DIP-9742N"/>
<dbReference type="FunCoup" id="P0ABQ2">
    <property type="interactions" value="586"/>
</dbReference>
<dbReference type="STRING" id="511145.b3125"/>
<dbReference type="jPOST" id="P0ABQ2"/>
<dbReference type="PaxDb" id="511145-b3125"/>
<dbReference type="EnsemblBacteria" id="AAC76159">
    <property type="protein sequence ID" value="AAC76159"/>
    <property type="gene ID" value="b3125"/>
</dbReference>
<dbReference type="GeneID" id="947631"/>
<dbReference type="KEGG" id="ecj:JW5526"/>
<dbReference type="KEGG" id="eco:b3125"/>
<dbReference type="PATRIC" id="fig|511145.12.peg.3218"/>
<dbReference type="EchoBASE" id="EB1163"/>
<dbReference type="eggNOG" id="COG2084">
    <property type="taxonomic scope" value="Bacteria"/>
</dbReference>
<dbReference type="HOGENOM" id="CLU_035117_1_1_6"/>
<dbReference type="InParanoid" id="P0ABQ2"/>
<dbReference type="PhylomeDB" id="P0ABQ2"/>
<dbReference type="BioCyc" id="EcoCyc:TSA-REDUCT-MONOMER"/>
<dbReference type="BioCyc" id="MetaCyc:TSA-REDUCT-MONOMER"/>
<dbReference type="SABIO-RK" id="P0ABQ2"/>
<dbReference type="UniPathway" id="UPA00565">
    <property type="reaction ID" value="UER00631"/>
</dbReference>
<dbReference type="PRO" id="PR:P0ABQ2"/>
<dbReference type="Proteomes" id="UP000000625">
    <property type="component" value="Chromosome"/>
</dbReference>
<dbReference type="GO" id="GO:0008679">
    <property type="term" value="F:2-hydroxy-3-oxopropionate reductase activity"/>
    <property type="evidence" value="ECO:0000314"/>
    <property type="project" value="EcoCyc"/>
</dbReference>
<dbReference type="GO" id="GO:0051287">
    <property type="term" value="F:NAD binding"/>
    <property type="evidence" value="ECO:0007669"/>
    <property type="project" value="InterPro"/>
</dbReference>
<dbReference type="GO" id="GO:0050661">
    <property type="term" value="F:NADP binding"/>
    <property type="evidence" value="ECO:0007669"/>
    <property type="project" value="InterPro"/>
</dbReference>
<dbReference type="GO" id="GO:0042838">
    <property type="term" value="P:D-glucarate catabolic process"/>
    <property type="evidence" value="ECO:0000314"/>
    <property type="project" value="EcoCyc"/>
</dbReference>
<dbReference type="GO" id="GO:0046392">
    <property type="term" value="P:galactarate catabolic process"/>
    <property type="evidence" value="ECO:0000314"/>
    <property type="project" value="EcoCyc"/>
</dbReference>
<dbReference type="GO" id="GO:0046487">
    <property type="term" value="P:glyoxylate metabolic process"/>
    <property type="evidence" value="ECO:0007669"/>
    <property type="project" value="InterPro"/>
</dbReference>
<dbReference type="FunFam" id="1.10.1040.10:FF:000008">
    <property type="entry name" value="2-hydroxy-3-oxopropionate reductase"/>
    <property type="match status" value="1"/>
</dbReference>
<dbReference type="FunFam" id="3.40.50.720:FF:000071">
    <property type="entry name" value="2-hydroxy-3-oxopropionate reductase"/>
    <property type="match status" value="1"/>
</dbReference>
<dbReference type="Gene3D" id="1.10.1040.10">
    <property type="entry name" value="N-(1-d-carboxylethyl)-l-norvaline Dehydrogenase, domain 2"/>
    <property type="match status" value="1"/>
</dbReference>
<dbReference type="Gene3D" id="3.40.50.720">
    <property type="entry name" value="NAD(P)-binding Rossmann-like Domain"/>
    <property type="match status" value="1"/>
</dbReference>
<dbReference type="HAMAP" id="MF_02032">
    <property type="entry name" value="Tartronate_sem_reduc"/>
    <property type="match status" value="1"/>
</dbReference>
<dbReference type="InterPro" id="IPR002204">
    <property type="entry name" value="3-OH-isobutyrate_DH-rel_CS"/>
</dbReference>
<dbReference type="InterPro" id="IPR008927">
    <property type="entry name" value="6-PGluconate_DH-like_C_sf"/>
</dbReference>
<dbReference type="InterPro" id="IPR013328">
    <property type="entry name" value="6PGD_dom2"/>
</dbReference>
<dbReference type="InterPro" id="IPR006115">
    <property type="entry name" value="6PGDH_NADP-bd"/>
</dbReference>
<dbReference type="InterPro" id="IPR029154">
    <property type="entry name" value="HIBADH-like_NADP-bd"/>
</dbReference>
<dbReference type="InterPro" id="IPR015815">
    <property type="entry name" value="HIBADH-related"/>
</dbReference>
<dbReference type="InterPro" id="IPR036291">
    <property type="entry name" value="NAD(P)-bd_dom_sf"/>
</dbReference>
<dbReference type="InterPro" id="IPR006398">
    <property type="entry name" value="Tartro_sem_red"/>
</dbReference>
<dbReference type="NCBIfam" id="NF008592">
    <property type="entry name" value="PRK11559.1"/>
    <property type="match status" value="1"/>
</dbReference>
<dbReference type="NCBIfam" id="TIGR01505">
    <property type="entry name" value="tartro_sem_red"/>
    <property type="match status" value="1"/>
</dbReference>
<dbReference type="PANTHER" id="PTHR43060:SF3">
    <property type="entry name" value="2-HYDROXY-3-OXOPROPIONATE REDUCTASE"/>
    <property type="match status" value="1"/>
</dbReference>
<dbReference type="PANTHER" id="PTHR43060">
    <property type="entry name" value="3-HYDROXYISOBUTYRATE DEHYDROGENASE-LIKE 1, MITOCHONDRIAL-RELATED"/>
    <property type="match status" value="1"/>
</dbReference>
<dbReference type="Pfam" id="PF14833">
    <property type="entry name" value="NAD_binding_11"/>
    <property type="match status" value="1"/>
</dbReference>
<dbReference type="Pfam" id="PF03446">
    <property type="entry name" value="NAD_binding_2"/>
    <property type="match status" value="1"/>
</dbReference>
<dbReference type="PIRSF" id="PIRSF000103">
    <property type="entry name" value="HIBADH"/>
    <property type="match status" value="1"/>
</dbReference>
<dbReference type="SUPFAM" id="SSF48179">
    <property type="entry name" value="6-phosphogluconate dehydrogenase C-terminal domain-like"/>
    <property type="match status" value="1"/>
</dbReference>
<dbReference type="SUPFAM" id="SSF51735">
    <property type="entry name" value="NAD(P)-binding Rossmann-fold domains"/>
    <property type="match status" value="1"/>
</dbReference>
<dbReference type="PROSITE" id="PS00895">
    <property type="entry name" value="3_HYDROXYISOBUT_DH"/>
    <property type="match status" value="1"/>
</dbReference>
<sequence length="294" mass="30427">MKVGFIGLGIMGKPMSKNLLKAGYSLVVADRNPEAIADVIAAGAETASTAKAIAEQCDVIITMLPNSPHVKEVALGENGIIEGAKPGTVLIDMSSIAPLASREISEALKAKGIDMLDAPVSGGEPKAIDGTLSVMVGGDKAIFDKYYDLMKAMAGSVVHTGEIGAGNVTKLANQVIVALNIAAMSEALTLATKAGVNPDLVYQAIRGGLAGSTVLDAKAPMVMDRNFKPGFRIDLHIKDLANALDTSHGVGAQLPLTAAVMEMMQALRADGLGTADHSALACYYEKLAKVEVTR</sequence>
<accession>P0ABQ2</accession>
<accession>P23523</accession>
<accession>Q2M984</accession>
<keyword id="KW-0520">NAD</keyword>
<keyword id="KW-0560">Oxidoreductase</keyword>
<keyword id="KW-1185">Reference proteome</keyword>
<protein>
    <recommendedName>
        <fullName evidence="1">2-hydroxy-3-oxopropionate reductase</fullName>
        <ecNumber evidence="1 3">1.1.1.60</ecNumber>
    </recommendedName>
    <alternativeName>
        <fullName evidence="1 5">Tartronate semialdehyde reductase</fullName>
        <shortName evidence="1 5">TSAR</shortName>
    </alternativeName>
</protein>
<evidence type="ECO:0000255" key="1">
    <source>
        <dbReference type="HAMAP-Rule" id="MF_02032"/>
    </source>
</evidence>
<evidence type="ECO:0000269" key="2">
    <source>
    </source>
</evidence>
<evidence type="ECO:0000269" key="3">
    <source>
    </source>
</evidence>
<evidence type="ECO:0000303" key="4">
    <source>
    </source>
</evidence>
<evidence type="ECO:0000303" key="5">
    <source>
    </source>
</evidence>
<evidence type="ECO:0000305" key="6"/>
<name>GARR_ECOLI</name>
<proteinExistence type="evidence at protein level"/>
<organism>
    <name type="scientific">Escherichia coli (strain K12)</name>
    <dbReference type="NCBI Taxonomy" id="83333"/>
    <lineage>
        <taxon>Bacteria</taxon>
        <taxon>Pseudomonadati</taxon>
        <taxon>Pseudomonadota</taxon>
        <taxon>Gammaproteobacteria</taxon>
        <taxon>Enterobacterales</taxon>
        <taxon>Enterobacteriaceae</taxon>
        <taxon>Escherichia</taxon>
    </lineage>
</organism>